<evidence type="ECO:0000255" key="1">
    <source>
        <dbReference type="HAMAP-Rule" id="MF_00366"/>
    </source>
</evidence>
<evidence type="ECO:0000305" key="2"/>
<evidence type="ECO:0007829" key="3">
    <source>
        <dbReference type="PDB" id="6J9E"/>
    </source>
</evidence>
<reference key="1">
    <citation type="journal article" date="2005" name="Nucleic Acids Res.">
        <title>The genome sequence of Xanthomonas oryzae pathovar oryzae KACC10331, the bacterial blight pathogen of rice.</title>
        <authorList>
            <person name="Lee B.-M."/>
            <person name="Park Y.-J."/>
            <person name="Park D.-S."/>
            <person name="Kang H.-W."/>
            <person name="Kim J.-G."/>
            <person name="Song E.-S."/>
            <person name="Park I.-C."/>
            <person name="Yoon U.-H."/>
            <person name="Hahn J.-H."/>
            <person name="Koo B.-S."/>
            <person name="Lee G.-B."/>
            <person name="Kim H."/>
            <person name="Park H.-S."/>
            <person name="Yoon K.-O."/>
            <person name="Kim J.-H."/>
            <person name="Jung C.-H."/>
            <person name="Koh N.-H."/>
            <person name="Seo J.-S."/>
            <person name="Go S.-J."/>
        </authorList>
    </citation>
    <scope>NUCLEOTIDE SEQUENCE [LARGE SCALE GENOMIC DNA]</scope>
    <source>
        <strain>KACC10331 / KXO85</strain>
    </source>
</reference>
<feature type="chain" id="PRO_0000237532" description="DNA-directed RNA polymerase subunit omega">
    <location>
        <begin position="1"/>
        <end position="99"/>
    </location>
</feature>
<feature type="helix" evidence="3">
    <location>
        <begin position="9"/>
        <end position="12"/>
    </location>
</feature>
<feature type="helix" evidence="3">
    <location>
        <begin position="16"/>
        <end position="31"/>
    </location>
</feature>
<feature type="helix" evidence="3">
    <location>
        <begin position="47"/>
        <end position="56"/>
    </location>
</feature>
<feature type="helix" evidence="3">
    <location>
        <begin position="62"/>
        <end position="75"/>
    </location>
</feature>
<organism>
    <name type="scientific">Xanthomonas oryzae pv. oryzae (strain KACC10331 / KXO85)</name>
    <dbReference type="NCBI Taxonomy" id="291331"/>
    <lineage>
        <taxon>Bacteria</taxon>
        <taxon>Pseudomonadati</taxon>
        <taxon>Pseudomonadota</taxon>
        <taxon>Gammaproteobacteria</taxon>
        <taxon>Lysobacterales</taxon>
        <taxon>Lysobacteraceae</taxon>
        <taxon>Xanthomonas</taxon>
    </lineage>
</organism>
<comment type="function">
    <text evidence="1">Promotes RNA polymerase assembly. Latches the N- and C-terminal regions of the beta' subunit thereby facilitating its interaction with the beta and alpha subunits.</text>
</comment>
<comment type="catalytic activity">
    <reaction evidence="1">
        <text>RNA(n) + a ribonucleoside 5'-triphosphate = RNA(n+1) + diphosphate</text>
        <dbReference type="Rhea" id="RHEA:21248"/>
        <dbReference type="Rhea" id="RHEA-COMP:14527"/>
        <dbReference type="Rhea" id="RHEA-COMP:17342"/>
        <dbReference type="ChEBI" id="CHEBI:33019"/>
        <dbReference type="ChEBI" id="CHEBI:61557"/>
        <dbReference type="ChEBI" id="CHEBI:140395"/>
        <dbReference type="EC" id="2.7.7.6"/>
    </reaction>
</comment>
<comment type="subunit">
    <text evidence="1">The RNAP catalytic core consists of 2 alpha, 1 beta, 1 beta' and 1 omega subunit. When a sigma factor is associated with the core the holoenzyme is formed, which can initiate transcription.</text>
</comment>
<comment type="similarity">
    <text evidence="1">Belongs to the RNA polymerase subunit omega family.</text>
</comment>
<comment type="sequence caution" evidence="2">
    <conflict type="erroneous initiation">
        <sequence resource="EMBL-CDS" id="AAW74402"/>
    </conflict>
</comment>
<proteinExistence type="evidence at protein level"/>
<protein>
    <recommendedName>
        <fullName evidence="1">DNA-directed RNA polymerase subunit omega</fullName>
        <shortName evidence="1">RNAP omega subunit</shortName>
        <ecNumber evidence="1">2.7.7.6</ecNumber>
    </recommendedName>
    <alternativeName>
        <fullName evidence="1">RNA polymerase omega subunit</fullName>
    </alternativeName>
    <alternativeName>
        <fullName evidence="1">Transcriptase subunit omega</fullName>
    </alternativeName>
</protein>
<keyword id="KW-0002">3D-structure</keyword>
<keyword id="KW-0240">DNA-directed RNA polymerase</keyword>
<keyword id="KW-0548">Nucleotidyltransferase</keyword>
<keyword id="KW-1185">Reference proteome</keyword>
<keyword id="KW-0804">Transcription</keyword>
<keyword id="KW-0808">Transferase</keyword>
<accession>Q5H3R9</accession>
<dbReference type="EC" id="2.7.7.6" evidence="1"/>
<dbReference type="EMBL" id="AE013598">
    <property type="protein sequence ID" value="AAW74402.1"/>
    <property type="status" value="ALT_INIT"/>
    <property type="molecule type" value="Genomic_DNA"/>
</dbReference>
<dbReference type="PDB" id="6J9E">
    <property type="method" value="EM"/>
    <property type="resolution" value="3.41 A"/>
    <property type="chains" value="E=1-99"/>
</dbReference>
<dbReference type="PDB" id="6J9F">
    <property type="method" value="EM"/>
    <property type="resolution" value="3.95 A"/>
    <property type="chains" value="E=1-99"/>
</dbReference>
<dbReference type="PDBsum" id="6J9E"/>
<dbReference type="PDBsum" id="6J9F"/>
<dbReference type="SMR" id="Q5H3R9"/>
<dbReference type="STRING" id="291331.XOO1148"/>
<dbReference type="KEGG" id="xoo:XOO1148"/>
<dbReference type="HOGENOM" id="CLU_125406_5_3_6"/>
<dbReference type="Proteomes" id="UP000006735">
    <property type="component" value="Chromosome"/>
</dbReference>
<dbReference type="GO" id="GO:0000428">
    <property type="term" value="C:DNA-directed RNA polymerase complex"/>
    <property type="evidence" value="ECO:0007669"/>
    <property type="project" value="UniProtKB-KW"/>
</dbReference>
<dbReference type="GO" id="GO:0003677">
    <property type="term" value="F:DNA binding"/>
    <property type="evidence" value="ECO:0007669"/>
    <property type="project" value="UniProtKB-UniRule"/>
</dbReference>
<dbReference type="GO" id="GO:0003899">
    <property type="term" value="F:DNA-directed RNA polymerase activity"/>
    <property type="evidence" value="ECO:0007669"/>
    <property type="project" value="UniProtKB-UniRule"/>
</dbReference>
<dbReference type="GO" id="GO:0006351">
    <property type="term" value="P:DNA-templated transcription"/>
    <property type="evidence" value="ECO:0007669"/>
    <property type="project" value="UniProtKB-UniRule"/>
</dbReference>
<dbReference type="Gene3D" id="3.90.940.10">
    <property type="match status" value="1"/>
</dbReference>
<dbReference type="HAMAP" id="MF_00366">
    <property type="entry name" value="RNApol_bact_RpoZ"/>
    <property type="match status" value="1"/>
</dbReference>
<dbReference type="InterPro" id="IPR003716">
    <property type="entry name" value="DNA-dir_RNA_pol_omega"/>
</dbReference>
<dbReference type="InterPro" id="IPR006110">
    <property type="entry name" value="Pol_omega/Rpo6/RPB6"/>
</dbReference>
<dbReference type="InterPro" id="IPR036161">
    <property type="entry name" value="RPB6/omega-like_sf"/>
</dbReference>
<dbReference type="NCBIfam" id="TIGR00690">
    <property type="entry name" value="rpoZ"/>
    <property type="match status" value="1"/>
</dbReference>
<dbReference type="PANTHER" id="PTHR34476">
    <property type="entry name" value="DNA-DIRECTED RNA POLYMERASE SUBUNIT OMEGA"/>
    <property type="match status" value="1"/>
</dbReference>
<dbReference type="PANTHER" id="PTHR34476:SF1">
    <property type="entry name" value="DNA-DIRECTED RNA POLYMERASE SUBUNIT OMEGA"/>
    <property type="match status" value="1"/>
</dbReference>
<dbReference type="Pfam" id="PF01192">
    <property type="entry name" value="RNA_pol_Rpb6"/>
    <property type="match status" value="1"/>
</dbReference>
<dbReference type="SMART" id="SM01409">
    <property type="entry name" value="RNA_pol_Rpb6"/>
    <property type="match status" value="1"/>
</dbReference>
<dbReference type="SUPFAM" id="SSF63562">
    <property type="entry name" value="RPB6/omega subunit-like"/>
    <property type="match status" value="1"/>
</dbReference>
<sequence length="99" mass="11099">MARITVEDCLEVVNNRFELVMMASKRARQLANGVQPLIENAAASDKPTVMALREIAARRIDNALIDEVEKAERERAEREALEWAAAEVVADEDMSKNDD</sequence>
<name>RPOZ_XANOR</name>
<gene>
    <name evidence="1" type="primary">rpoZ</name>
    <name type="ordered locus">XOO1148</name>
</gene>